<name>KRT81_BOVIN</name>
<comment type="subunit">
    <text evidence="5">Heterotetramer of two type I and two type II keratins.</text>
</comment>
<comment type="miscellaneous">
    <text evidence="5">There are two types of hair/microfibrillar keratin, I (acidic) and II (neutral to basic).</text>
</comment>
<comment type="similarity">
    <text evidence="4">Belongs to the intermediate filament family.</text>
</comment>
<sequence length="500" mass="54613">MTCGSGFRGRAFSCVSACGPRPGRCCITAAPYRGISCYRGLTGGFGSRSICGGFRAGSFGRSFGYRSGGVGGLNPPCITTVSVNESLLTPLNLEIDPNAQCVKQEEKEQIKCLNNRFAAFIDKVRFLEQQNKLLETKLQFYQNRQCCESNLEPLFNGYIETLRREAECVEADSGRLSSELNSLQEVLEGYKKKYEEEVALRATAENEFVALKKDVDCAYLRKSDLEANVEALIQEIDFLRRLYEEEIRVLQAHISDTSVIVKMDNSRDLNMDNIVAEIKAQYDDIASRSRAEAESWYRSKCEEIKATVIRHGETLRRTKEEINELNRVIQRLTAEVENAKCQNSKLEAAVTQAEQQGEAALNDAKCKLAGLEEALQKAKQDMACLLKEYQEVMNSKLGLDIEIATYRRLLEGEEQRLCEGVGSVNVCVSSSRGGVVCGDLCVSGSRPVTGSVCSAPCSGNLAVSTGLCAPCGPCNSVTSCGLGGISSCGVGSCASVCRKC</sequence>
<organism>
    <name type="scientific">Bos taurus</name>
    <name type="common">Bovine</name>
    <dbReference type="NCBI Taxonomy" id="9913"/>
    <lineage>
        <taxon>Eukaryota</taxon>
        <taxon>Metazoa</taxon>
        <taxon>Chordata</taxon>
        <taxon>Craniata</taxon>
        <taxon>Vertebrata</taxon>
        <taxon>Euteleostomi</taxon>
        <taxon>Mammalia</taxon>
        <taxon>Eutheria</taxon>
        <taxon>Laurasiatheria</taxon>
        <taxon>Artiodactyla</taxon>
        <taxon>Ruminantia</taxon>
        <taxon>Pecora</taxon>
        <taxon>Bovidae</taxon>
        <taxon>Bovinae</taxon>
        <taxon>Bos</taxon>
    </lineage>
</organism>
<protein>
    <recommendedName>
        <fullName evidence="2">Keratin, type II cuticular Hb1</fullName>
    </recommendedName>
    <alternativeName>
        <fullName evidence="6">Keratin-81</fullName>
        <shortName>K81</shortName>
    </alternativeName>
    <alternativeName>
        <fullName>Type II hair keratin Hb1</fullName>
    </alternativeName>
    <alternativeName>
        <fullName>Type-II keratin Kb21</fullName>
    </alternativeName>
</protein>
<keyword id="KW-0175">Coiled coil</keyword>
<keyword id="KW-0403">Intermediate filament</keyword>
<keyword id="KW-1017">Isopeptide bond</keyword>
<keyword id="KW-0416">Keratin</keyword>
<keyword id="KW-1185">Reference proteome</keyword>
<keyword id="KW-0832">Ubl conjugation</keyword>
<feature type="chain" id="PRO_0000361689" description="Keratin, type II cuticular Hb1">
    <location>
        <begin position="1"/>
        <end position="500"/>
    </location>
</feature>
<feature type="domain" description="IF rod" evidence="4">
    <location>
        <begin position="106"/>
        <end position="417"/>
    </location>
</feature>
<feature type="region of interest" description="Head" evidence="3">
    <location>
        <begin position="1"/>
        <end position="106"/>
    </location>
</feature>
<feature type="region of interest" description="Coil 1A" evidence="3">
    <location>
        <begin position="107"/>
        <end position="141"/>
    </location>
</feature>
<feature type="region of interest" description="Linker 1" evidence="3">
    <location>
        <begin position="142"/>
        <end position="151"/>
    </location>
</feature>
<feature type="region of interest" description="Coil 1B" evidence="3">
    <location>
        <begin position="152"/>
        <end position="252"/>
    </location>
</feature>
<feature type="region of interest" description="Linker 12" evidence="3">
    <location>
        <begin position="253"/>
        <end position="269"/>
    </location>
</feature>
<feature type="region of interest" description="Coil 2" evidence="3">
    <location>
        <begin position="270"/>
        <end position="413"/>
    </location>
</feature>
<feature type="region of interest" description="Tail" evidence="3">
    <location>
        <begin position="414"/>
        <end position="500"/>
    </location>
</feature>
<feature type="cross-link" description="Glycyl lysine isopeptide (Lys-Gly) (interchain with G-Cter in SUMO1)" evidence="1">
    <location>
        <position position="212"/>
    </location>
</feature>
<accession>Q148H4</accession>
<reference evidence="6" key="1">
    <citation type="submission" date="2006-06" db="EMBL/GenBank/DDBJ databases">
        <authorList>
            <consortium name="NIH - Mammalian Gene Collection (MGC) project"/>
        </authorList>
    </citation>
    <scope>NUCLEOTIDE SEQUENCE [LARGE SCALE MRNA]</scope>
    <source>
        <strain evidence="6">Hereford</strain>
        <tissue evidence="6">Fetal skin</tissue>
    </source>
</reference>
<proteinExistence type="evidence at transcript level"/>
<dbReference type="EMBL" id="BC118319">
    <property type="protein sequence ID" value="AAI18320.1"/>
    <property type="molecule type" value="mRNA"/>
</dbReference>
<dbReference type="RefSeq" id="NP_001069674.1">
    <property type="nucleotide sequence ID" value="NM_001076206.1"/>
</dbReference>
<dbReference type="SMR" id="Q148H4"/>
<dbReference type="STRING" id="9913.ENSBTAP00000038271"/>
<dbReference type="PaxDb" id="9913-ENSBTAP00000038271"/>
<dbReference type="GeneID" id="540204"/>
<dbReference type="KEGG" id="bta:540204"/>
<dbReference type="CTD" id="3887"/>
<dbReference type="VEuPathDB" id="HostDB:ENSBTAG00000006739"/>
<dbReference type="eggNOG" id="ENOG502SKJW">
    <property type="taxonomic scope" value="Eukaryota"/>
</dbReference>
<dbReference type="HOGENOM" id="CLU_012560_5_0_1"/>
<dbReference type="InParanoid" id="Q148H4"/>
<dbReference type="OMA" id="CCESHLE"/>
<dbReference type="OrthoDB" id="2441647at2759"/>
<dbReference type="TreeFam" id="TF317854"/>
<dbReference type="Reactome" id="R-BTA-6805567">
    <property type="pathway name" value="Keratinization"/>
</dbReference>
<dbReference type="Reactome" id="R-BTA-6809371">
    <property type="pathway name" value="Formation of the cornified envelope"/>
</dbReference>
<dbReference type="Proteomes" id="UP000009136">
    <property type="component" value="Chromosome 5"/>
</dbReference>
<dbReference type="Bgee" id="ENSBTAG00000006739">
    <property type="expression patterns" value="Expressed in surface of tongue and 34 other cell types or tissues"/>
</dbReference>
<dbReference type="GO" id="GO:0045095">
    <property type="term" value="C:keratin filament"/>
    <property type="evidence" value="ECO:0000318"/>
    <property type="project" value="GO_Central"/>
</dbReference>
<dbReference type="GO" id="GO:0030280">
    <property type="term" value="F:structural constituent of skin epidermis"/>
    <property type="evidence" value="ECO:0000318"/>
    <property type="project" value="GO_Central"/>
</dbReference>
<dbReference type="GO" id="GO:0045109">
    <property type="term" value="P:intermediate filament organization"/>
    <property type="evidence" value="ECO:0000318"/>
    <property type="project" value="GO_Central"/>
</dbReference>
<dbReference type="GO" id="GO:0031424">
    <property type="term" value="P:keratinization"/>
    <property type="evidence" value="ECO:0000318"/>
    <property type="project" value="GO_Central"/>
</dbReference>
<dbReference type="FunFam" id="1.20.5.1160:FF:000001">
    <property type="entry name" value="Keratin type II"/>
    <property type="match status" value="1"/>
</dbReference>
<dbReference type="FunFam" id="1.20.5.170:FF:000004">
    <property type="entry name" value="Keratin, type II cytoskeletal 5"/>
    <property type="match status" value="1"/>
</dbReference>
<dbReference type="FunFam" id="1.20.5.500:FF:000001">
    <property type="entry name" value="Type II keratin 23"/>
    <property type="match status" value="1"/>
</dbReference>
<dbReference type="Gene3D" id="1.20.5.170">
    <property type="match status" value="1"/>
</dbReference>
<dbReference type="Gene3D" id="1.20.5.500">
    <property type="entry name" value="Single helix bin"/>
    <property type="match status" value="1"/>
</dbReference>
<dbReference type="Gene3D" id="1.20.5.1160">
    <property type="entry name" value="Vasodilator-stimulated phosphoprotein"/>
    <property type="match status" value="1"/>
</dbReference>
<dbReference type="InterPro" id="IPR018039">
    <property type="entry name" value="IF_conserved"/>
</dbReference>
<dbReference type="InterPro" id="IPR039008">
    <property type="entry name" value="IF_rod_dom"/>
</dbReference>
<dbReference type="InterPro" id="IPR032444">
    <property type="entry name" value="Keratin_2_head"/>
</dbReference>
<dbReference type="InterPro" id="IPR003054">
    <property type="entry name" value="Keratin_II"/>
</dbReference>
<dbReference type="PANTHER" id="PTHR45616">
    <property type="entry name" value="GATA-TYPE DOMAIN-CONTAINING PROTEIN"/>
    <property type="match status" value="1"/>
</dbReference>
<dbReference type="PANTHER" id="PTHR45616:SF52">
    <property type="entry name" value="KERATIN, TYPE II CUTICULAR HB3"/>
    <property type="match status" value="1"/>
</dbReference>
<dbReference type="Pfam" id="PF00038">
    <property type="entry name" value="Filament"/>
    <property type="match status" value="1"/>
</dbReference>
<dbReference type="Pfam" id="PF16208">
    <property type="entry name" value="Keratin_2_head"/>
    <property type="match status" value="1"/>
</dbReference>
<dbReference type="PRINTS" id="PR01276">
    <property type="entry name" value="TYPE2KERATIN"/>
</dbReference>
<dbReference type="SMART" id="SM01391">
    <property type="entry name" value="Filament"/>
    <property type="match status" value="1"/>
</dbReference>
<dbReference type="SUPFAM" id="SSF64593">
    <property type="entry name" value="Intermediate filament protein, coiled coil region"/>
    <property type="match status" value="2"/>
</dbReference>
<dbReference type="PROSITE" id="PS00226">
    <property type="entry name" value="IF_ROD_1"/>
    <property type="match status" value="1"/>
</dbReference>
<dbReference type="PROSITE" id="PS51842">
    <property type="entry name" value="IF_ROD_2"/>
    <property type="match status" value="1"/>
</dbReference>
<gene>
    <name evidence="6" type="primary">KRT81</name>
</gene>
<evidence type="ECO:0000250" key="1">
    <source>
        <dbReference type="UniProtKB" id="P78386"/>
    </source>
</evidence>
<evidence type="ECO:0000250" key="2">
    <source>
        <dbReference type="UniProtKB" id="Q14533"/>
    </source>
</evidence>
<evidence type="ECO:0000255" key="3"/>
<evidence type="ECO:0000255" key="4">
    <source>
        <dbReference type="PROSITE-ProRule" id="PRU01188"/>
    </source>
</evidence>
<evidence type="ECO:0000305" key="5"/>
<evidence type="ECO:0000312" key="6">
    <source>
        <dbReference type="EMBL" id="AAI18320.1"/>
    </source>
</evidence>